<reference key="1">
    <citation type="journal article" date="2008" name="J. Bacteriol.">
        <title>Genome sequence of the chemolithoautotrophic bacterium Oligotropha carboxidovorans OM5T.</title>
        <authorList>
            <person name="Paul D."/>
            <person name="Bridges S."/>
            <person name="Burgess S.C."/>
            <person name="Dandass Y."/>
            <person name="Lawrence M.L."/>
        </authorList>
    </citation>
    <scope>NUCLEOTIDE SEQUENCE [LARGE SCALE GENOMIC DNA]</scope>
    <source>
        <strain>ATCC 49405 / DSM 1227 / KCTC 32145 / OM5</strain>
    </source>
</reference>
<reference key="2">
    <citation type="journal article" date="2011" name="J. Bacteriol.">
        <title>Complete genome sequences of the chemolithoautotrophic Oligotropha carboxidovorans strains OM4 and OM5.</title>
        <authorList>
            <person name="Volland S."/>
            <person name="Rachinger M."/>
            <person name="Strittmatter A."/>
            <person name="Daniel R."/>
            <person name="Gottschalk G."/>
            <person name="Meyer O."/>
        </authorList>
    </citation>
    <scope>NUCLEOTIDE SEQUENCE [LARGE SCALE GENOMIC DNA]</scope>
    <source>
        <strain>ATCC 49405 / DSM 1227 / KCTC 32145 / OM5</strain>
    </source>
</reference>
<keyword id="KW-0030">Aminoacyl-tRNA synthetase</keyword>
<keyword id="KW-0067">ATP-binding</keyword>
<keyword id="KW-0963">Cytoplasm</keyword>
<keyword id="KW-0436">Ligase</keyword>
<keyword id="KW-0547">Nucleotide-binding</keyword>
<keyword id="KW-0648">Protein biosynthesis</keyword>
<keyword id="KW-1185">Reference proteome</keyword>
<gene>
    <name evidence="1" type="primary">leuS</name>
    <name type="ordered locus">OCAR_4363</name>
    <name type="ordered locus">OCA5_c01660</name>
</gene>
<name>SYL_AFIC5</name>
<comment type="catalytic activity">
    <reaction evidence="1">
        <text>tRNA(Leu) + L-leucine + ATP = L-leucyl-tRNA(Leu) + AMP + diphosphate</text>
        <dbReference type="Rhea" id="RHEA:11688"/>
        <dbReference type="Rhea" id="RHEA-COMP:9613"/>
        <dbReference type="Rhea" id="RHEA-COMP:9622"/>
        <dbReference type="ChEBI" id="CHEBI:30616"/>
        <dbReference type="ChEBI" id="CHEBI:33019"/>
        <dbReference type="ChEBI" id="CHEBI:57427"/>
        <dbReference type="ChEBI" id="CHEBI:78442"/>
        <dbReference type="ChEBI" id="CHEBI:78494"/>
        <dbReference type="ChEBI" id="CHEBI:456215"/>
        <dbReference type="EC" id="6.1.1.4"/>
    </reaction>
</comment>
<comment type="subcellular location">
    <subcellularLocation>
        <location evidence="1">Cytoplasm</location>
    </subcellularLocation>
</comment>
<comment type="similarity">
    <text evidence="1">Belongs to the class-I aminoacyl-tRNA synthetase family.</text>
</comment>
<organism>
    <name type="scientific">Afipia carboxidovorans (strain ATCC 49405 / DSM 1227 / KCTC 32145 / OM5)</name>
    <name type="common">Oligotropha carboxidovorans</name>
    <dbReference type="NCBI Taxonomy" id="504832"/>
    <lineage>
        <taxon>Bacteria</taxon>
        <taxon>Pseudomonadati</taxon>
        <taxon>Pseudomonadota</taxon>
        <taxon>Alphaproteobacteria</taxon>
        <taxon>Hyphomicrobiales</taxon>
        <taxon>Nitrobacteraceae</taxon>
        <taxon>Afipia</taxon>
    </lineage>
</organism>
<proteinExistence type="inferred from homology"/>
<protein>
    <recommendedName>
        <fullName evidence="1">Leucine--tRNA ligase</fullName>
        <ecNumber evidence="1">6.1.1.4</ecNumber>
    </recommendedName>
    <alternativeName>
        <fullName evidence="1">Leucyl-tRNA synthetase</fullName>
        <shortName evidence="1">LeuRS</shortName>
    </alternativeName>
</protein>
<accession>B6JAI4</accession>
<accession>F8BS31</accession>
<evidence type="ECO:0000255" key="1">
    <source>
        <dbReference type="HAMAP-Rule" id="MF_00049"/>
    </source>
</evidence>
<sequence>MSTERYNAREVEPRWQQIWDEKGVFASRNDDSRPKYYVLEMFPYPSGRIHMGHVRNYTMGDVVARYRRAKGHNVLHPMGWDAFGMPAENAAMQNKTHPAKWTYANIAAMKKQLKSMGLSLDWAREIATCDPSYYKHQQRMFLDFLKAGLVERKQSKVNWDPVDQTVLANEQVIDGRGWRSGALVEQRELTQWFFKISDYSEELLTALDTLDRWPEKVRLMQKNWIGRSEGLLVRFALDAATAPAGESEVEVFTTRPDTLFGAKFVALSPDHPLAAEVAKANPKLEAFIAECHRHGTAQAEIDTAEKLGFDTGLRARHPFDPDWLLPVYVANFVLMDYGTGAIFGCPAHDQRDLDFVNKYGLGNTPVVCPEGQDPKSFVITDTAYDGDGRMINSRFLDGMTIADAKEDVAKRLETATLPRANGGGNAPVAKRQVNYRLRDWGISRQRYWGCPIPIIHCESCGIVPVPVKDLPVKLPDDIEFDRPGNPLDRHPTWKHVACPQCGGKARRETDTMDTFVDSSWYFARFTDPWNENAPTTRKVVDAMMPVDQYIGGIEHAILHLLYSRFFTRAMKATGHVGFDEPFAGLFTQGMVVHETYKNADGSWAAPSEIKIEGTGDARHATLIDTGAPVEIGSIEKMSKSKRNTIDPDDIIGTYGADTARWFMLSDSPPDRDVIWSEEGVQGANRFVQRVWRLVNLAAPHLPKDSAAAGTSADTKPLRSTAHRTLADVSQAIERLRFNTAIAKLYAFVGPLNEAIDDPRLKADPAWAASVREALDMLVRMIAPMMPHLAEQCWEALGGQGLVSEAAWPEVDPVLLVEDTITLPVQINGKKRADVTVGRNAPNPEIEAAVLALDAVKTALAGATPRKIIVVPQRIVNVVV</sequence>
<feature type="chain" id="PRO_1000091340" description="Leucine--tRNA ligase">
    <location>
        <begin position="1"/>
        <end position="879"/>
    </location>
</feature>
<feature type="short sequence motif" description="'HIGH' region">
    <location>
        <begin position="43"/>
        <end position="53"/>
    </location>
</feature>
<feature type="short sequence motif" description="'KMSKS' region">
    <location>
        <begin position="636"/>
        <end position="640"/>
    </location>
</feature>
<feature type="binding site" evidence="1">
    <location>
        <position position="639"/>
    </location>
    <ligand>
        <name>ATP</name>
        <dbReference type="ChEBI" id="CHEBI:30616"/>
    </ligand>
</feature>
<dbReference type="EC" id="6.1.1.4" evidence="1"/>
<dbReference type="EMBL" id="CP001196">
    <property type="protein sequence ID" value="ACI91509.1"/>
    <property type="molecule type" value="Genomic_DNA"/>
</dbReference>
<dbReference type="EMBL" id="CP002826">
    <property type="protein sequence ID" value="AEI04898.1"/>
    <property type="molecule type" value="Genomic_DNA"/>
</dbReference>
<dbReference type="RefSeq" id="WP_012561540.1">
    <property type="nucleotide sequence ID" value="NC_015684.1"/>
</dbReference>
<dbReference type="SMR" id="B6JAI4"/>
<dbReference type="STRING" id="504832.OCA5_c01660"/>
<dbReference type="KEGG" id="oca:OCAR_4363"/>
<dbReference type="KEGG" id="ocg:OCA5_c01660"/>
<dbReference type="PATRIC" id="fig|504832.7.peg.175"/>
<dbReference type="eggNOG" id="COG0495">
    <property type="taxonomic scope" value="Bacteria"/>
</dbReference>
<dbReference type="HOGENOM" id="CLU_004427_0_0_5"/>
<dbReference type="OrthoDB" id="9810365at2"/>
<dbReference type="Proteomes" id="UP000007730">
    <property type="component" value="Chromosome"/>
</dbReference>
<dbReference type="GO" id="GO:0005829">
    <property type="term" value="C:cytosol"/>
    <property type="evidence" value="ECO:0007669"/>
    <property type="project" value="TreeGrafter"/>
</dbReference>
<dbReference type="GO" id="GO:0002161">
    <property type="term" value="F:aminoacyl-tRNA deacylase activity"/>
    <property type="evidence" value="ECO:0007669"/>
    <property type="project" value="InterPro"/>
</dbReference>
<dbReference type="GO" id="GO:0005524">
    <property type="term" value="F:ATP binding"/>
    <property type="evidence" value="ECO:0007669"/>
    <property type="project" value="UniProtKB-UniRule"/>
</dbReference>
<dbReference type="GO" id="GO:0004823">
    <property type="term" value="F:leucine-tRNA ligase activity"/>
    <property type="evidence" value="ECO:0007669"/>
    <property type="project" value="UniProtKB-UniRule"/>
</dbReference>
<dbReference type="GO" id="GO:0006429">
    <property type="term" value="P:leucyl-tRNA aminoacylation"/>
    <property type="evidence" value="ECO:0007669"/>
    <property type="project" value="UniProtKB-UniRule"/>
</dbReference>
<dbReference type="CDD" id="cd07958">
    <property type="entry name" value="Anticodon_Ia_Leu_BEm"/>
    <property type="match status" value="1"/>
</dbReference>
<dbReference type="CDD" id="cd00812">
    <property type="entry name" value="LeuRS_core"/>
    <property type="match status" value="1"/>
</dbReference>
<dbReference type="FunFam" id="1.10.730.10:FF:000002">
    <property type="entry name" value="Leucine--tRNA ligase"/>
    <property type="match status" value="1"/>
</dbReference>
<dbReference type="FunFam" id="3.40.50.620:FF:000003">
    <property type="entry name" value="Leucine--tRNA ligase"/>
    <property type="match status" value="1"/>
</dbReference>
<dbReference type="Gene3D" id="2.20.28.290">
    <property type="match status" value="1"/>
</dbReference>
<dbReference type="Gene3D" id="3.10.20.590">
    <property type="match status" value="1"/>
</dbReference>
<dbReference type="Gene3D" id="3.40.50.620">
    <property type="entry name" value="HUPs"/>
    <property type="match status" value="2"/>
</dbReference>
<dbReference type="Gene3D" id="1.10.730.10">
    <property type="entry name" value="Isoleucyl-tRNA Synthetase, Domain 1"/>
    <property type="match status" value="2"/>
</dbReference>
<dbReference type="HAMAP" id="MF_00049_B">
    <property type="entry name" value="Leu_tRNA_synth_B"/>
    <property type="match status" value="1"/>
</dbReference>
<dbReference type="InterPro" id="IPR001412">
    <property type="entry name" value="aa-tRNA-synth_I_CS"/>
</dbReference>
<dbReference type="InterPro" id="IPR002300">
    <property type="entry name" value="aa-tRNA-synth_Ia"/>
</dbReference>
<dbReference type="InterPro" id="IPR002302">
    <property type="entry name" value="Leu-tRNA-ligase"/>
</dbReference>
<dbReference type="InterPro" id="IPR025709">
    <property type="entry name" value="Leu_tRNA-synth_edit"/>
</dbReference>
<dbReference type="InterPro" id="IPR013155">
    <property type="entry name" value="M/V/L/I-tRNA-synth_anticd-bd"/>
</dbReference>
<dbReference type="InterPro" id="IPR015413">
    <property type="entry name" value="Methionyl/Leucyl_tRNA_Synth"/>
</dbReference>
<dbReference type="InterPro" id="IPR014729">
    <property type="entry name" value="Rossmann-like_a/b/a_fold"/>
</dbReference>
<dbReference type="InterPro" id="IPR009080">
    <property type="entry name" value="tRNAsynth_Ia_anticodon-bd"/>
</dbReference>
<dbReference type="InterPro" id="IPR009008">
    <property type="entry name" value="Val/Leu/Ile-tRNA-synth_edit"/>
</dbReference>
<dbReference type="NCBIfam" id="TIGR00396">
    <property type="entry name" value="leuS_bact"/>
    <property type="match status" value="1"/>
</dbReference>
<dbReference type="PANTHER" id="PTHR43740:SF2">
    <property type="entry name" value="LEUCINE--TRNA LIGASE, MITOCHONDRIAL"/>
    <property type="match status" value="1"/>
</dbReference>
<dbReference type="PANTHER" id="PTHR43740">
    <property type="entry name" value="LEUCYL-TRNA SYNTHETASE"/>
    <property type="match status" value="1"/>
</dbReference>
<dbReference type="Pfam" id="PF08264">
    <property type="entry name" value="Anticodon_1"/>
    <property type="match status" value="1"/>
</dbReference>
<dbReference type="Pfam" id="PF00133">
    <property type="entry name" value="tRNA-synt_1"/>
    <property type="match status" value="2"/>
</dbReference>
<dbReference type="Pfam" id="PF13603">
    <property type="entry name" value="tRNA-synt_1_2"/>
    <property type="match status" value="1"/>
</dbReference>
<dbReference type="Pfam" id="PF09334">
    <property type="entry name" value="tRNA-synt_1g"/>
    <property type="match status" value="1"/>
</dbReference>
<dbReference type="PRINTS" id="PR00985">
    <property type="entry name" value="TRNASYNTHLEU"/>
</dbReference>
<dbReference type="SUPFAM" id="SSF47323">
    <property type="entry name" value="Anticodon-binding domain of a subclass of class I aminoacyl-tRNA synthetases"/>
    <property type="match status" value="1"/>
</dbReference>
<dbReference type="SUPFAM" id="SSF52374">
    <property type="entry name" value="Nucleotidylyl transferase"/>
    <property type="match status" value="1"/>
</dbReference>
<dbReference type="SUPFAM" id="SSF50677">
    <property type="entry name" value="ValRS/IleRS/LeuRS editing domain"/>
    <property type="match status" value="1"/>
</dbReference>
<dbReference type="PROSITE" id="PS00178">
    <property type="entry name" value="AA_TRNA_LIGASE_I"/>
    <property type="match status" value="1"/>
</dbReference>